<proteinExistence type="evidence at protein level"/>
<organism>
    <name type="scientific">Caenorhabditis elegans</name>
    <dbReference type="NCBI Taxonomy" id="6239"/>
    <lineage>
        <taxon>Eukaryota</taxon>
        <taxon>Metazoa</taxon>
        <taxon>Ecdysozoa</taxon>
        <taxon>Nematoda</taxon>
        <taxon>Chromadorea</taxon>
        <taxon>Rhabditida</taxon>
        <taxon>Rhabditina</taxon>
        <taxon>Rhabditomorpha</taxon>
        <taxon>Rhabditoidea</taxon>
        <taxon>Rhabditidae</taxon>
        <taxon>Peloderinae</taxon>
        <taxon>Caenorhabditis</taxon>
    </lineage>
</organism>
<sequence>MPPIPSRARVYAEVNPSRPREYWDYEAHMIEWGQIDDYQLVRKLGRGKYSEVFEGFKMSTDEKVVVKILKPVKKKKIKREIKILENLRGGTNIITLLDVVKDPISRTPALIFEHVNNSDFKQLYQTLSDYDIRYYLYELLKALDFCHSQGIMHRDVKPHNVMIDAEKRELRLIDWGLAEFYHPRQDYNVRVASRYFKGPELLVDYQCYDYSLDMWSLGCMLASMIFRKEPFFHGHDNYDQLVRIAKVLGTDELYEYIARYHIDLDPRFNDILGRHSRKRWERFIHAENQHLVTPEALDFLDKLLRYDHAERLTAQEAMGHEYFRPVVEAHARANGTEQADGQGASNSASSQSSDAKIDGA</sequence>
<feature type="chain" id="PRO_0000085898" description="Casein kinase II subunit alpha">
    <location>
        <begin position="1"/>
        <end position="360"/>
    </location>
</feature>
<feature type="domain" description="Protein kinase" evidence="1">
    <location>
        <begin position="38"/>
        <end position="323"/>
    </location>
</feature>
<feature type="region of interest" description="Disordered" evidence="3">
    <location>
        <begin position="334"/>
        <end position="360"/>
    </location>
</feature>
<feature type="compositionally biased region" description="Low complexity" evidence="3">
    <location>
        <begin position="338"/>
        <end position="354"/>
    </location>
</feature>
<feature type="active site" description="Proton acceptor" evidence="1 2">
    <location>
        <position position="155"/>
    </location>
</feature>
<feature type="binding site" evidence="1">
    <location>
        <begin position="44"/>
        <end position="52"/>
    </location>
    <ligand>
        <name>ATP</name>
        <dbReference type="ChEBI" id="CHEBI:30616"/>
    </ligand>
</feature>
<feature type="binding site" evidence="1">
    <location>
        <position position="67"/>
    </location>
    <ligand>
        <name>ATP</name>
        <dbReference type="ChEBI" id="CHEBI:30616"/>
    </ligand>
</feature>
<keyword id="KW-0067">ATP-binding</keyword>
<keyword id="KW-0085">Behavior</keyword>
<keyword id="KW-0966">Cell projection</keyword>
<keyword id="KW-0969">Cilium</keyword>
<keyword id="KW-0418">Kinase</keyword>
<keyword id="KW-0547">Nucleotide-binding</keyword>
<keyword id="KW-1185">Reference proteome</keyword>
<keyword id="KW-0723">Serine/threonine-protein kinase</keyword>
<keyword id="KW-0808">Transferase</keyword>
<keyword id="KW-0879">Wnt signaling pathway</keyword>
<accession>P18334</accession>
<gene>
    <name type="primary">kin-3</name>
    <name type="ORF">B0205.7</name>
</gene>
<dbReference type="EC" id="2.7.11.1"/>
<dbReference type="EMBL" id="J05274">
    <property type="protein sequence ID" value="AAA27984.1"/>
    <property type="molecule type" value="Genomic_DNA"/>
</dbReference>
<dbReference type="EMBL" id="FO080112">
    <property type="protein sequence ID" value="CCD61302.1"/>
    <property type="molecule type" value="Genomic_DNA"/>
</dbReference>
<dbReference type="PIR" id="A35562">
    <property type="entry name" value="A35562"/>
</dbReference>
<dbReference type="RefSeq" id="NP_492811.1">
    <property type="nucleotide sequence ID" value="NM_060410.5"/>
</dbReference>
<dbReference type="SMR" id="P18334"/>
<dbReference type="BioGRID" id="38389">
    <property type="interactions" value="26"/>
</dbReference>
<dbReference type="FunCoup" id="P18334">
    <property type="interactions" value="2574"/>
</dbReference>
<dbReference type="IntAct" id="P18334">
    <property type="interactions" value="5"/>
</dbReference>
<dbReference type="STRING" id="6239.B0205.7.1"/>
<dbReference type="PaxDb" id="6239-B0205.7"/>
<dbReference type="PeptideAtlas" id="P18334"/>
<dbReference type="EnsemblMetazoa" id="B0205.7.1">
    <property type="protein sequence ID" value="B0205.7.1"/>
    <property type="gene ID" value="WBGene00002191"/>
</dbReference>
<dbReference type="GeneID" id="172978"/>
<dbReference type="KEGG" id="cel:CELE_B0205.7"/>
<dbReference type="UCSC" id="B0205.7">
    <property type="organism name" value="c. elegans"/>
</dbReference>
<dbReference type="AGR" id="WB:WBGene00002191"/>
<dbReference type="CTD" id="172978"/>
<dbReference type="WormBase" id="B0205.7">
    <property type="protein sequence ID" value="CE17321"/>
    <property type="gene ID" value="WBGene00002191"/>
    <property type="gene designation" value="kin-3"/>
</dbReference>
<dbReference type="eggNOG" id="KOG0668">
    <property type="taxonomic scope" value="Eukaryota"/>
</dbReference>
<dbReference type="GeneTree" id="ENSGT00390000004215"/>
<dbReference type="HOGENOM" id="CLU_000288_70_4_1"/>
<dbReference type="InParanoid" id="P18334"/>
<dbReference type="OMA" id="FEGFKMS"/>
<dbReference type="OrthoDB" id="10254671at2759"/>
<dbReference type="PhylomeDB" id="P18334"/>
<dbReference type="BRENDA" id="2.7.11.1">
    <property type="organism ID" value="1045"/>
</dbReference>
<dbReference type="Reactome" id="R-CEL-1483191">
    <property type="pathway name" value="Synthesis of PC"/>
</dbReference>
<dbReference type="Reactome" id="R-CEL-201688">
    <property type="pathway name" value="WNT mediated activation of DVL"/>
</dbReference>
<dbReference type="Reactome" id="R-CEL-445144">
    <property type="pathway name" value="Signal transduction by L1"/>
</dbReference>
<dbReference type="Reactome" id="R-CEL-6804756">
    <property type="pathway name" value="Regulation of TP53 Activity through Phosphorylation"/>
</dbReference>
<dbReference type="Reactome" id="R-CEL-6814122">
    <property type="pathway name" value="Cooperation of PDCL (PhLP1) and TRiC/CCT in G-protein beta folding"/>
</dbReference>
<dbReference type="Reactome" id="R-CEL-8934903">
    <property type="pathway name" value="Receptor Mediated Mitophagy"/>
</dbReference>
<dbReference type="Reactome" id="R-CEL-8948751">
    <property type="pathway name" value="Regulation of PTEN stability and activity"/>
</dbReference>
<dbReference type="PRO" id="PR:P18334"/>
<dbReference type="Proteomes" id="UP000001940">
    <property type="component" value="Chromosome I"/>
</dbReference>
<dbReference type="Bgee" id="WBGene00002191">
    <property type="expression patterns" value="Expressed in germ line (C elegans) and 4 other cell types or tissues"/>
</dbReference>
<dbReference type="GO" id="GO:0030424">
    <property type="term" value="C:axon"/>
    <property type="evidence" value="ECO:0000314"/>
    <property type="project" value="UniProtKB"/>
</dbReference>
<dbReference type="GO" id="GO:0005929">
    <property type="term" value="C:cilium"/>
    <property type="evidence" value="ECO:0000314"/>
    <property type="project" value="UniProtKB"/>
</dbReference>
<dbReference type="GO" id="GO:0005829">
    <property type="term" value="C:cytosol"/>
    <property type="evidence" value="ECO:0000318"/>
    <property type="project" value="GO_Central"/>
</dbReference>
<dbReference type="GO" id="GO:0030425">
    <property type="term" value="C:dendrite"/>
    <property type="evidence" value="ECO:0000314"/>
    <property type="project" value="UniProtKB"/>
</dbReference>
<dbReference type="GO" id="GO:0043025">
    <property type="term" value="C:neuronal cell body"/>
    <property type="evidence" value="ECO:0000314"/>
    <property type="project" value="UniProtKB"/>
</dbReference>
<dbReference type="GO" id="GO:0097730">
    <property type="term" value="C:non-motile cilium"/>
    <property type="evidence" value="ECO:0000314"/>
    <property type="project" value="WormBase"/>
</dbReference>
<dbReference type="GO" id="GO:0005634">
    <property type="term" value="C:nucleus"/>
    <property type="evidence" value="ECO:0000314"/>
    <property type="project" value="WormBase"/>
</dbReference>
<dbReference type="GO" id="GO:0043204">
    <property type="term" value="C:perikaryon"/>
    <property type="evidence" value="ECO:0007669"/>
    <property type="project" value="UniProtKB-SubCell"/>
</dbReference>
<dbReference type="GO" id="GO:0005956">
    <property type="term" value="C:protein kinase CK2 complex"/>
    <property type="evidence" value="ECO:0000314"/>
    <property type="project" value="WormBase"/>
</dbReference>
<dbReference type="GO" id="GO:0005524">
    <property type="term" value="F:ATP binding"/>
    <property type="evidence" value="ECO:0007669"/>
    <property type="project" value="UniProtKB-KW"/>
</dbReference>
<dbReference type="GO" id="GO:0004672">
    <property type="term" value="F:protein kinase activity"/>
    <property type="evidence" value="ECO:0000314"/>
    <property type="project" value="WormBase"/>
</dbReference>
<dbReference type="GO" id="GO:0106310">
    <property type="term" value="F:protein serine kinase activity"/>
    <property type="evidence" value="ECO:0007669"/>
    <property type="project" value="RHEA"/>
</dbReference>
<dbReference type="GO" id="GO:0004674">
    <property type="term" value="F:protein serine/threonine kinase activity"/>
    <property type="evidence" value="ECO:0000314"/>
    <property type="project" value="CAFA"/>
</dbReference>
<dbReference type="GO" id="GO:0006974">
    <property type="term" value="P:DNA damage response"/>
    <property type="evidence" value="ECO:0000318"/>
    <property type="project" value="GO_Central"/>
</dbReference>
<dbReference type="GO" id="GO:0018105">
    <property type="term" value="P:peptidyl-serine phosphorylation"/>
    <property type="evidence" value="ECO:0000314"/>
    <property type="project" value="CAFA"/>
</dbReference>
<dbReference type="GO" id="GO:0051726">
    <property type="term" value="P:regulation of cell cycle"/>
    <property type="evidence" value="ECO:0000318"/>
    <property type="project" value="GO_Central"/>
</dbReference>
<dbReference type="GO" id="GO:0034606">
    <property type="term" value="P:response to hermaphrodite contact"/>
    <property type="evidence" value="ECO:0000315"/>
    <property type="project" value="WormBase"/>
</dbReference>
<dbReference type="GO" id="GO:0034608">
    <property type="term" value="P:vulval location"/>
    <property type="evidence" value="ECO:0000315"/>
    <property type="project" value="WormBase"/>
</dbReference>
<dbReference type="GO" id="GO:0016055">
    <property type="term" value="P:Wnt signaling pathway"/>
    <property type="evidence" value="ECO:0007669"/>
    <property type="project" value="UniProtKB-KW"/>
</dbReference>
<dbReference type="CDD" id="cd14132">
    <property type="entry name" value="STKc_CK2_alpha"/>
    <property type="match status" value="1"/>
</dbReference>
<dbReference type="FunFam" id="1.10.510.10:FF:000059">
    <property type="entry name" value="Casein kinase II subunit alpha"/>
    <property type="match status" value="1"/>
</dbReference>
<dbReference type="FunFam" id="3.30.200.20:FF:000088">
    <property type="entry name" value="Casein kinase II subunit alpha"/>
    <property type="match status" value="1"/>
</dbReference>
<dbReference type="Gene3D" id="3.30.200.20">
    <property type="entry name" value="Phosphorylase Kinase, domain 1"/>
    <property type="match status" value="1"/>
</dbReference>
<dbReference type="Gene3D" id="1.10.510.10">
    <property type="entry name" value="Transferase(Phosphotransferase) domain 1"/>
    <property type="match status" value="1"/>
</dbReference>
<dbReference type="InterPro" id="IPR045216">
    <property type="entry name" value="CK2_alpha"/>
</dbReference>
<dbReference type="InterPro" id="IPR011009">
    <property type="entry name" value="Kinase-like_dom_sf"/>
</dbReference>
<dbReference type="InterPro" id="IPR000719">
    <property type="entry name" value="Prot_kinase_dom"/>
</dbReference>
<dbReference type="InterPro" id="IPR017441">
    <property type="entry name" value="Protein_kinase_ATP_BS"/>
</dbReference>
<dbReference type="InterPro" id="IPR008271">
    <property type="entry name" value="Ser/Thr_kinase_AS"/>
</dbReference>
<dbReference type="PANTHER" id="PTHR24054">
    <property type="entry name" value="CASEIN KINASE II SUBUNIT ALPHA"/>
    <property type="match status" value="1"/>
</dbReference>
<dbReference type="PANTHER" id="PTHR24054:SF0">
    <property type="entry name" value="CASEIN KINASE II SUBUNIT ALPHA"/>
    <property type="match status" value="1"/>
</dbReference>
<dbReference type="Pfam" id="PF00069">
    <property type="entry name" value="Pkinase"/>
    <property type="match status" value="1"/>
</dbReference>
<dbReference type="SMART" id="SM00220">
    <property type="entry name" value="S_TKc"/>
    <property type="match status" value="1"/>
</dbReference>
<dbReference type="SUPFAM" id="SSF56112">
    <property type="entry name" value="Protein kinase-like (PK-like)"/>
    <property type="match status" value="1"/>
</dbReference>
<dbReference type="PROSITE" id="PS00107">
    <property type="entry name" value="PROTEIN_KINASE_ATP"/>
    <property type="match status" value="1"/>
</dbReference>
<dbReference type="PROSITE" id="PS50011">
    <property type="entry name" value="PROTEIN_KINASE_DOM"/>
    <property type="match status" value="1"/>
</dbReference>
<dbReference type="PROSITE" id="PS00108">
    <property type="entry name" value="PROTEIN_KINASE_ST"/>
    <property type="match status" value="1"/>
</dbReference>
<name>CSK2A_CAEEL</name>
<protein>
    <recommendedName>
        <fullName>Casein kinase II subunit alpha</fullName>
        <shortName>CK II subunit alpha</shortName>
        <ecNumber>2.7.11.1</ecNumber>
    </recommendedName>
</protein>
<reference key="1">
    <citation type="journal article" date="1990" name="J. Biol. Chem.">
        <title>Casein kinase II from Caenorhabditis elegans. Properties and developmental regulation of the enzyme; cloning and sequence analyses of cDNA and the gene for the catalytic subunit.</title>
        <authorList>
            <person name="Hu E."/>
            <person name="Rubin C.S."/>
        </authorList>
    </citation>
    <scope>NUCLEOTIDE SEQUENCE [GENOMIC DNA]</scope>
</reference>
<reference key="2">
    <citation type="journal article" date="1998" name="Science">
        <title>Genome sequence of the nematode C. elegans: a platform for investigating biology.</title>
        <authorList>
            <consortium name="The C. elegans sequencing consortium"/>
        </authorList>
    </citation>
    <scope>NUCLEOTIDE SEQUENCE [LARGE SCALE GENOMIC DNA]</scope>
    <source>
        <strain>Bristol N2</strain>
    </source>
</reference>
<reference key="3">
    <citation type="journal article" date="2006" name="Mol. Biol. Cell">
        <title>Casein kinase II and calcineurin modulate TRPP function and ciliary localization.</title>
        <authorList>
            <person name="Hu J."/>
            <person name="Bae Y.-K."/>
            <person name="Knobel K.M."/>
            <person name="Barr M.M."/>
        </authorList>
    </citation>
    <scope>FUNCTION</scope>
    <scope>SUBCELLULAR LOCATION</scope>
    <scope>TISSUE SPECIFICITY</scope>
</reference>
<comment type="function">
    <text evidence="4">Casein kinases are operationally defined by their preferential utilization of acidic proteins such as caseins as substrates. The alpha chain contains the catalytic site. May participate in Wnt signaling. Modulates two aspects of male mating behavior; response to hermaphrodite contact and vulval location, acting in the same pathway as lov-1 and pkd-2.</text>
</comment>
<comment type="catalytic activity">
    <reaction>
        <text>L-seryl-[protein] + ATP = O-phospho-L-seryl-[protein] + ADP + H(+)</text>
        <dbReference type="Rhea" id="RHEA:17989"/>
        <dbReference type="Rhea" id="RHEA-COMP:9863"/>
        <dbReference type="Rhea" id="RHEA-COMP:11604"/>
        <dbReference type="ChEBI" id="CHEBI:15378"/>
        <dbReference type="ChEBI" id="CHEBI:29999"/>
        <dbReference type="ChEBI" id="CHEBI:30616"/>
        <dbReference type="ChEBI" id="CHEBI:83421"/>
        <dbReference type="ChEBI" id="CHEBI:456216"/>
        <dbReference type="EC" id="2.7.11.1"/>
    </reaction>
</comment>
<comment type="catalytic activity">
    <reaction>
        <text>L-threonyl-[protein] + ATP = O-phospho-L-threonyl-[protein] + ADP + H(+)</text>
        <dbReference type="Rhea" id="RHEA:46608"/>
        <dbReference type="Rhea" id="RHEA-COMP:11060"/>
        <dbReference type="Rhea" id="RHEA-COMP:11605"/>
        <dbReference type="ChEBI" id="CHEBI:15378"/>
        <dbReference type="ChEBI" id="CHEBI:30013"/>
        <dbReference type="ChEBI" id="CHEBI:30616"/>
        <dbReference type="ChEBI" id="CHEBI:61977"/>
        <dbReference type="ChEBI" id="CHEBI:456216"/>
        <dbReference type="EC" id="2.7.11.1"/>
    </reaction>
</comment>
<comment type="subunit">
    <text>Tetramer of two alpha and two beta chains.</text>
</comment>
<comment type="interaction">
    <interactant intactId="EBI-367861">
        <id>P18334</id>
    </interactant>
    <interactant intactId="EBI-317777">
        <id>P28548</id>
        <label>kin-10</label>
    </interactant>
    <organismsDiffer>false</organismsDiffer>
    <experiments>5</experiments>
</comment>
<comment type="interaction">
    <interactant intactId="EBI-367861">
        <id>P18334</id>
    </interactant>
    <interactant intactId="EBI-3843983">
        <id>Q11184</id>
        <label>let-756</label>
    </interactant>
    <organismsDiffer>false</organismsDiffer>
    <experiments>3</experiments>
</comment>
<comment type="subcellular location">
    <subcellularLocation>
        <location evidence="4">Cell projection</location>
        <location evidence="4">Axon</location>
    </subcellularLocation>
    <subcellularLocation>
        <location evidence="4">Cell projection</location>
        <location evidence="4">Cilium</location>
    </subcellularLocation>
    <subcellularLocation>
        <location evidence="4">Cell projection</location>
        <location evidence="4">Dendrite</location>
    </subcellularLocation>
    <subcellularLocation>
        <location evidence="4">Perikaryon</location>
    </subcellularLocation>
    <text>Enriched in cilia in male sensory neurons.</text>
</comment>
<comment type="tissue specificity">
    <text evidence="4">Expressed in a subset of the adult male sensory neurons: CEM head neurons, ray RnB neurons, and hook HOB tail neurons.</text>
</comment>
<comment type="similarity">
    <text evidence="1">Belongs to the protein kinase superfamily. Ser/Thr protein kinase family. CK2 subfamily.</text>
</comment>
<evidence type="ECO:0000255" key="1">
    <source>
        <dbReference type="PROSITE-ProRule" id="PRU00159"/>
    </source>
</evidence>
<evidence type="ECO:0000255" key="2">
    <source>
        <dbReference type="PROSITE-ProRule" id="PRU10027"/>
    </source>
</evidence>
<evidence type="ECO:0000256" key="3">
    <source>
        <dbReference type="SAM" id="MobiDB-lite"/>
    </source>
</evidence>
<evidence type="ECO:0000269" key="4">
    <source>
    </source>
</evidence>